<reference key="1">
    <citation type="submission" date="2004-12" db="EMBL/GenBank/DDBJ databases">
        <title>The genome sequence of Borrelia hermsii and Borrelia turicatae: comparative analysis of two agents of endemic N. America relapsing fever.</title>
        <authorList>
            <person name="Porcella S.F."/>
            <person name="Raffel S.J."/>
            <person name="Schrumpf M.E."/>
            <person name="Montgomery B."/>
            <person name="Smith T."/>
            <person name="Schwan T.G."/>
        </authorList>
    </citation>
    <scope>NUCLEOTIDE SEQUENCE [LARGE SCALE GENOMIC DNA]</scope>
    <source>
        <strain>HS1 / DAH</strain>
    </source>
</reference>
<sequence length="338" mass="37469">MIVLGIESSCDDCCAAIVEDGVKILSNIKLSQKEHKKYYGVVPEIASRLHTEFIMSVCQKAITNAQIHASEIDLIAVTSKPGLIGSLIVGINFAKGLSIALKKPLICIDHILGHLYAPLMTIKIEYPFLSLILSGGHTILAKQNDFDDIEILGRTLDDACGEAFDKVAKHYKMGFPGGPNIEKLAKCGNQYAFNFPITIFDKKENRYDFSYSGLKTACIHQLEKFKDKNENITNNNIAASFQRVAFENLIIPIKRAIKDTNIKKLIISGGVASNLYLREKIKNLEVETYYPPIDLCTDNGAMIAGIGYLMYLKYGASPIETDANSRIENYKYTKGAKL</sequence>
<keyword id="KW-0012">Acyltransferase</keyword>
<keyword id="KW-0963">Cytoplasm</keyword>
<keyword id="KW-0408">Iron</keyword>
<keyword id="KW-0479">Metal-binding</keyword>
<keyword id="KW-0808">Transferase</keyword>
<keyword id="KW-0819">tRNA processing</keyword>
<dbReference type="EC" id="2.3.1.234" evidence="1"/>
<dbReference type="EMBL" id="CP000048">
    <property type="protein sequence ID" value="AAX17264.1"/>
    <property type="molecule type" value="Genomic_DNA"/>
</dbReference>
<dbReference type="RefSeq" id="WP_012422514.1">
    <property type="nucleotide sequence ID" value="NZ_CP073136.1"/>
</dbReference>
<dbReference type="SMR" id="B2S1B0"/>
<dbReference type="KEGG" id="bhr:BH0769"/>
<dbReference type="HOGENOM" id="CLU_023208_0_2_12"/>
<dbReference type="Proteomes" id="UP000008834">
    <property type="component" value="Chromosome"/>
</dbReference>
<dbReference type="GO" id="GO:0005737">
    <property type="term" value="C:cytoplasm"/>
    <property type="evidence" value="ECO:0007669"/>
    <property type="project" value="UniProtKB-SubCell"/>
</dbReference>
<dbReference type="GO" id="GO:0005506">
    <property type="term" value="F:iron ion binding"/>
    <property type="evidence" value="ECO:0007669"/>
    <property type="project" value="UniProtKB-UniRule"/>
</dbReference>
<dbReference type="GO" id="GO:0061711">
    <property type="term" value="F:N(6)-L-threonylcarbamoyladenine synthase activity"/>
    <property type="evidence" value="ECO:0007669"/>
    <property type="project" value="UniProtKB-EC"/>
</dbReference>
<dbReference type="GO" id="GO:0002949">
    <property type="term" value="P:tRNA threonylcarbamoyladenosine modification"/>
    <property type="evidence" value="ECO:0007669"/>
    <property type="project" value="UniProtKB-UniRule"/>
</dbReference>
<dbReference type="CDD" id="cd24133">
    <property type="entry name" value="ASKHA_NBD_TsaD_bac"/>
    <property type="match status" value="1"/>
</dbReference>
<dbReference type="FunFam" id="3.30.420.40:FF:000012">
    <property type="entry name" value="tRNA N6-adenosine threonylcarbamoyltransferase"/>
    <property type="match status" value="1"/>
</dbReference>
<dbReference type="Gene3D" id="3.30.420.40">
    <property type="match status" value="2"/>
</dbReference>
<dbReference type="HAMAP" id="MF_01445">
    <property type="entry name" value="TsaD"/>
    <property type="match status" value="1"/>
</dbReference>
<dbReference type="InterPro" id="IPR043129">
    <property type="entry name" value="ATPase_NBD"/>
</dbReference>
<dbReference type="InterPro" id="IPR000905">
    <property type="entry name" value="Gcp-like_dom"/>
</dbReference>
<dbReference type="InterPro" id="IPR017861">
    <property type="entry name" value="KAE1/TsaD"/>
</dbReference>
<dbReference type="InterPro" id="IPR017860">
    <property type="entry name" value="Peptidase_M22_CS"/>
</dbReference>
<dbReference type="InterPro" id="IPR022450">
    <property type="entry name" value="TsaD"/>
</dbReference>
<dbReference type="NCBIfam" id="TIGR00329">
    <property type="entry name" value="gcp_kae1"/>
    <property type="match status" value="1"/>
</dbReference>
<dbReference type="NCBIfam" id="TIGR03723">
    <property type="entry name" value="T6A_TsaD_YgjD"/>
    <property type="match status" value="1"/>
</dbReference>
<dbReference type="PANTHER" id="PTHR11735">
    <property type="entry name" value="TRNA N6-ADENOSINE THREONYLCARBAMOYLTRANSFERASE"/>
    <property type="match status" value="1"/>
</dbReference>
<dbReference type="PANTHER" id="PTHR11735:SF6">
    <property type="entry name" value="TRNA N6-ADENOSINE THREONYLCARBAMOYLTRANSFERASE, MITOCHONDRIAL"/>
    <property type="match status" value="1"/>
</dbReference>
<dbReference type="Pfam" id="PF00814">
    <property type="entry name" value="TsaD"/>
    <property type="match status" value="1"/>
</dbReference>
<dbReference type="PRINTS" id="PR00789">
    <property type="entry name" value="OSIALOPTASE"/>
</dbReference>
<dbReference type="SUPFAM" id="SSF53067">
    <property type="entry name" value="Actin-like ATPase domain"/>
    <property type="match status" value="2"/>
</dbReference>
<dbReference type="PROSITE" id="PS01016">
    <property type="entry name" value="GLYCOPROTEASE"/>
    <property type="match status" value="1"/>
</dbReference>
<gene>
    <name evidence="1" type="primary">tsaD</name>
    <name type="synonym">gcp</name>
    <name type="ordered locus">BH0769</name>
</gene>
<accession>B2S1B0</accession>
<proteinExistence type="inferred from homology"/>
<organism>
    <name type="scientific">Borrelia hermsii (strain HS1 / DAH)</name>
    <dbReference type="NCBI Taxonomy" id="314723"/>
    <lineage>
        <taxon>Bacteria</taxon>
        <taxon>Pseudomonadati</taxon>
        <taxon>Spirochaetota</taxon>
        <taxon>Spirochaetia</taxon>
        <taxon>Spirochaetales</taxon>
        <taxon>Borreliaceae</taxon>
        <taxon>Borrelia</taxon>
    </lineage>
</organism>
<evidence type="ECO:0000255" key="1">
    <source>
        <dbReference type="HAMAP-Rule" id="MF_01445"/>
    </source>
</evidence>
<comment type="function">
    <text evidence="1">Required for the formation of a threonylcarbamoyl group on adenosine at position 37 (t(6)A37) in tRNAs that read codons beginning with adenine. Is involved in the transfer of the threonylcarbamoyl moiety of threonylcarbamoyl-AMP (TC-AMP) to the N6 group of A37, together with TsaE and TsaB. TsaD likely plays a direct catalytic role in this reaction.</text>
</comment>
<comment type="catalytic activity">
    <reaction evidence="1">
        <text>L-threonylcarbamoyladenylate + adenosine(37) in tRNA = N(6)-L-threonylcarbamoyladenosine(37) in tRNA + AMP + H(+)</text>
        <dbReference type="Rhea" id="RHEA:37059"/>
        <dbReference type="Rhea" id="RHEA-COMP:10162"/>
        <dbReference type="Rhea" id="RHEA-COMP:10163"/>
        <dbReference type="ChEBI" id="CHEBI:15378"/>
        <dbReference type="ChEBI" id="CHEBI:73682"/>
        <dbReference type="ChEBI" id="CHEBI:74411"/>
        <dbReference type="ChEBI" id="CHEBI:74418"/>
        <dbReference type="ChEBI" id="CHEBI:456215"/>
        <dbReference type="EC" id="2.3.1.234"/>
    </reaction>
</comment>
<comment type="cofactor">
    <cofactor evidence="1">
        <name>Fe(2+)</name>
        <dbReference type="ChEBI" id="CHEBI:29033"/>
    </cofactor>
    <text evidence="1">Binds 1 Fe(2+) ion per subunit.</text>
</comment>
<comment type="subcellular location">
    <subcellularLocation>
        <location evidence="1">Cytoplasm</location>
    </subcellularLocation>
</comment>
<comment type="similarity">
    <text evidence="1">Belongs to the KAE1 / TsaD family.</text>
</comment>
<name>TSAD_BORHD</name>
<feature type="chain" id="PRO_1000145950" description="tRNA N6-adenosine threonylcarbamoyltransferase">
    <location>
        <begin position="1"/>
        <end position="338"/>
    </location>
</feature>
<feature type="binding site" evidence="1">
    <location>
        <position position="110"/>
    </location>
    <ligand>
        <name>Fe cation</name>
        <dbReference type="ChEBI" id="CHEBI:24875"/>
    </ligand>
</feature>
<feature type="binding site" evidence="1">
    <location>
        <position position="114"/>
    </location>
    <ligand>
        <name>Fe cation</name>
        <dbReference type="ChEBI" id="CHEBI:24875"/>
    </ligand>
</feature>
<feature type="binding site" evidence="1">
    <location>
        <begin position="132"/>
        <end position="136"/>
    </location>
    <ligand>
        <name>substrate</name>
    </ligand>
</feature>
<feature type="binding site" evidence="1">
    <location>
        <position position="165"/>
    </location>
    <ligand>
        <name>substrate</name>
    </ligand>
</feature>
<feature type="binding site" evidence="1">
    <location>
        <position position="178"/>
    </location>
    <ligand>
        <name>substrate</name>
    </ligand>
</feature>
<feature type="binding site" evidence="1">
    <location>
        <position position="274"/>
    </location>
    <ligand>
        <name>substrate</name>
    </ligand>
</feature>
<feature type="binding site" evidence="1">
    <location>
        <position position="298"/>
    </location>
    <ligand>
        <name>Fe cation</name>
        <dbReference type="ChEBI" id="CHEBI:24875"/>
    </ligand>
</feature>
<protein>
    <recommendedName>
        <fullName evidence="1">tRNA N6-adenosine threonylcarbamoyltransferase</fullName>
        <ecNumber evidence="1">2.3.1.234</ecNumber>
    </recommendedName>
    <alternativeName>
        <fullName evidence="1">N6-L-threonylcarbamoyladenine synthase</fullName>
        <shortName evidence="1">t(6)A synthase</shortName>
    </alternativeName>
    <alternativeName>
        <fullName evidence="1">t(6)A37 threonylcarbamoyladenosine biosynthesis protein TsaD</fullName>
    </alternativeName>
    <alternativeName>
        <fullName evidence="1">tRNA threonylcarbamoyladenosine biosynthesis protein TsaD</fullName>
    </alternativeName>
</protein>